<sequence length="463" mass="49273">MEKPSREAFEGNNKLLIGIVLSVITFWLFAQSLVNVVPILEDSFNTDIGTVNIAVSITALFSGMFVVGAGGLADKYGRIKLTNIGIILNILGSLLIIISNIPLLLIIGRLIQGLSAACIMPATLSIIKSYYIGKDRQRALSYWSIGSWGGSGVCSFFGGAVATLLGWRWIFILSIIISLIALFLIKGTPETKSKSISLNKFDIKGLVLLVIMLLTLNILITKGSELGVTSLLFITLLAIAIGSFSLFIVLEKRATNPLIDFKLFKNKAYTGATASNFLLNGVAGTLIVANTFVQRGLGYSSLQAGSLSITYLVMVLIMIRVGEKLLQTLGCKKPMLIGTGVLIVGECLISLTFLPEILYVICCIIGYLFFGLGLGIYATPSTDTAIANAPLEKVGVAAGIYKMASALGGAFGVALSGAVYAIVSNMTNIYTGAMIALWLNAGMGILSFVIILLLVPKQNDTQL</sequence>
<dbReference type="EMBL" id="CP000736">
    <property type="protein sequence ID" value="ABR52374.1"/>
    <property type="molecule type" value="Genomic_DNA"/>
</dbReference>
<dbReference type="SMR" id="A6U1Q6"/>
<dbReference type="KEGG" id="sah:SaurJH1_1525"/>
<dbReference type="HOGENOM" id="CLU_000960_28_3_9"/>
<dbReference type="GO" id="GO:0005886">
    <property type="term" value="C:plasma membrane"/>
    <property type="evidence" value="ECO:0007669"/>
    <property type="project" value="UniProtKB-SubCell"/>
</dbReference>
<dbReference type="GO" id="GO:0022857">
    <property type="term" value="F:transmembrane transporter activity"/>
    <property type="evidence" value="ECO:0007669"/>
    <property type="project" value="InterPro"/>
</dbReference>
<dbReference type="GO" id="GO:0046677">
    <property type="term" value="P:response to antibiotic"/>
    <property type="evidence" value="ECO:0007669"/>
    <property type="project" value="UniProtKB-KW"/>
</dbReference>
<dbReference type="CDD" id="cd17321">
    <property type="entry name" value="MFS_MMR_MDR_like"/>
    <property type="match status" value="1"/>
</dbReference>
<dbReference type="FunFam" id="1.20.1250.20:FF:000252">
    <property type="entry name" value="Quinolone resistance protein NorB"/>
    <property type="match status" value="1"/>
</dbReference>
<dbReference type="FunFam" id="1.20.1720.10:FF:000015">
    <property type="entry name" value="Quinolone resistance protein NorB"/>
    <property type="match status" value="1"/>
</dbReference>
<dbReference type="Gene3D" id="1.20.1250.20">
    <property type="entry name" value="MFS general substrate transporter like domains"/>
    <property type="match status" value="1"/>
</dbReference>
<dbReference type="Gene3D" id="1.20.1720.10">
    <property type="entry name" value="Multidrug resistance protein D"/>
    <property type="match status" value="1"/>
</dbReference>
<dbReference type="InterPro" id="IPR011701">
    <property type="entry name" value="MFS"/>
</dbReference>
<dbReference type="InterPro" id="IPR020846">
    <property type="entry name" value="MFS_dom"/>
</dbReference>
<dbReference type="InterPro" id="IPR036259">
    <property type="entry name" value="MFS_trans_sf"/>
</dbReference>
<dbReference type="PANTHER" id="PTHR42718">
    <property type="entry name" value="MAJOR FACILITATOR SUPERFAMILY MULTIDRUG TRANSPORTER MFSC"/>
    <property type="match status" value="1"/>
</dbReference>
<dbReference type="PANTHER" id="PTHR42718:SF9">
    <property type="entry name" value="MAJOR FACILITATOR SUPERFAMILY MULTIDRUG TRANSPORTER MFSC"/>
    <property type="match status" value="1"/>
</dbReference>
<dbReference type="Pfam" id="PF07690">
    <property type="entry name" value="MFS_1"/>
    <property type="match status" value="1"/>
</dbReference>
<dbReference type="SUPFAM" id="SSF103473">
    <property type="entry name" value="MFS general substrate transporter"/>
    <property type="match status" value="1"/>
</dbReference>
<dbReference type="PROSITE" id="PS50850">
    <property type="entry name" value="MFS"/>
    <property type="match status" value="1"/>
</dbReference>
<name>NORB_STAA2</name>
<reference key="1">
    <citation type="submission" date="2007-06" db="EMBL/GenBank/DDBJ databases">
        <title>Complete sequence of chromosome of Staphylococcus aureus subsp. aureus JH1.</title>
        <authorList>
            <consortium name="US DOE Joint Genome Institute"/>
            <person name="Copeland A."/>
            <person name="Lucas S."/>
            <person name="Lapidus A."/>
            <person name="Barry K."/>
            <person name="Detter J.C."/>
            <person name="Glavina del Rio T."/>
            <person name="Hammon N."/>
            <person name="Israni S."/>
            <person name="Dalin E."/>
            <person name="Tice H."/>
            <person name="Pitluck S."/>
            <person name="Chain P."/>
            <person name="Malfatti S."/>
            <person name="Shin M."/>
            <person name="Vergez L."/>
            <person name="Schmutz J."/>
            <person name="Larimer F."/>
            <person name="Land M."/>
            <person name="Hauser L."/>
            <person name="Kyrpides N."/>
            <person name="Ivanova N."/>
            <person name="Tomasz A."/>
            <person name="Richardson P."/>
        </authorList>
    </citation>
    <scope>NUCLEOTIDE SEQUENCE [LARGE SCALE GENOMIC DNA]</scope>
    <source>
        <strain>JH1</strain>
    </source>
</reference>
<proteinExistence type="inferred from homology"/>
<protein>
    <recommendedName>
        <fullName>Quinolone resistance protein NorB</fullName>
    </recommendedName>
</protein>
<gene>
    <name type="primary">norB</name>
    <name type="ordered locus">SaurJH1_1525</name>
</gene>
<feature type="chain" id="PRO_0000361956" description="Quinolone resistance protein NorB">
    <location>
        <begin position="1"/>
        <end position="463"/>
    </location>
</feature>
<feature type="transmembrane region" description="Helical" evidence="2">
    <location>
        <begin position="17"/>
        <end position="37"/>
    </location>
</feature>
<feature type="transmembrane region" description="Helical" evidence="2">
    <location>
        <begin position="53"/>
        <end position="73"/>
    </location>
</feature>
<feature type="transmembrane region" description="Helical" evidence="2">
    <location>
        <begin position="86"/>
        <end position="106"/>
    </location>
</feature>
<feature type="transmembrane region" description="Helical" evidence="2">
    <location>
        <begin position="107"/>
        <end position="127"/>
    </location>
</feature>
<feature type="transmembrane region" description="Helical" evidence="2">
    <location>
        <begin position="142"/>
        <end position="162"/>
    </location>
</feature>
<feature type="transmembrane region" description="Helical" evidence="2">
    <location>
        <begin position="165"/>
        <end position="185"/>
    </location>
</feature>
<feature type="transmembrane region" description="Helical" evidence="2">
    <location>
        <begin position="201"/>
        <end position="221"/>
    </location>
</feature>
<feature type="transmembrane region" description="Helical" evidence="2">
    <location>
        <begin position="230"/>
        <end position="250"/>
    </location>
</feature>
<feature type="transmembrane region" description="Helical" evidence="2">
    <location>
        <begin position="273"/>
        <end position="293"/>
    </location>
</feature>
<feature type="transmembrane region" description="Helical" evidence="2">
    <location>
        <begin position="299"/>
        <end position="319"/>
    </location>
</feature>
<feature type="transmembrane region" description="Helical" evidence="2">
    <location>
        <begin position="334"/>
        <end position="354"/>
    </location>
</feature>
<feature type="transmembrane region" description="Helical" evidence="2">
    <location>
        <begin position="357"/>
        <end position="377"/>
    </location>
</feature>
<feature type="transmembrane region" description="Helical" evidence="2">
    <location>
        <begin position="403"/>
        <end position="423"/>
    </location>
</feature>
<feature type="transmembrane region" description="Helical" evidence="2">
    <location>
        <begin position="435"/>
        <end position="455"/>
    </location>
</feature>
<keyword id="KW-0046">Antibiotic resistance</keyword>
<keyword id="KW-1003">Cell membrane</keyword>
<keyword id="KW-0472">Membrane</keyword>
<keyword id="KW-0812">Transmembrane</keyword>
<keyword id="KW-1133">Transmembrane helix</keyword>
<keyword id="KW-0813">Transport</keyword>
<comment type="function">
    <text evidence="1">Multidrug efflux pump that acts independently of NorA and is one of the factors that confers resistance against diverse quinolones and chemical compounds.</text>
</comment>
<comment type="subcellular location">
    <subcellularLocation>
        <location evidence="3">Cell membrane</location>
        <topology evidence="3">Multi-pass membrane protein</topology>
    </subcellularLocation>
</comment>
<comment type="similarity">
    <text evidence="3">Belongs to the major facilitator superfamily. TCR/Tet family.</text>
</comment>
<evidence type="ECO:0000250" key="1"/>
<evidence type="ECO:0000255" key="2"/>
<evidence type="ECO:0000305" key="3"/>
<organism>
    <name type="scientific">Staphylococcus aureus (strain JH1)</name>
    <dbReference type="NCBI Taxonomy" id="359787"/>
    <lineage>
        <taxon>Bacteria</taxon>
        <taxon>Bacillati</taxon>
        <taxon>Bacillota</taxon>
        <taxon>Bacilli</taxon>
        <taxon>Bacillales</taxon>
        <taxon>Staphylococcaceae</taxon>
        <taxon>Staphylococcus</taxon>
    </lineage>
</organism>
<accession>A6U1Q6</accession>